<comment type="function">
    <text evidence="1 3">Subunit of both mTORC1 and mTORC2, which regulates cell growth and survival in response to nutrient and hormonal signals (PubMed:17141160). mTORC1 is activated in response to growth factors or amino acids (By similarity). In response to nutrients, mTORC1 is recruited to the lysosome membrane and promotes protein, lipid and nucleotide synthesis by phosphorylating several substrates, such as ribosomal protein S6 kinase (RPS6KB1 and RPS6KB2) and EIF4EBP1 (4E-BP1) (By similarity). In the same time, it inhibits catabolic pathways by phosphorylating the autophagy initiation components ULK1 and ATG13, as well as transcription factor TFEB, a master regulators of lysosomal biogenesis and autophagy (By similarity). The mTORC1 complex is inhibited in response to starvation and amino acid depletion (By similarity). Within mTORC1, MLST8 interacts directly with MTOR and enhances its kinase activity (By similarity). In nutrient-poor conditions, stabilizes the MTOR-RPTOR interaction and favors RPTOR-mediated inhibition of MTOR activity (By similarity). As part of the mTORC2 complex, transduces signals from growth factors to pathways involved in proliferation, cytoskeletal organization, lipogenesis and anabolic output (By similarity). mTORC2 is also activated by growth factors, but seems to be nutrient-insensitive (By similarity). In response to growth factors, mTORC2 phosphorylates and activates AGC protein kinase family members, including AKT (AKT1, AKT2 and AKT3), PKC (PRKCA, PRKCB and PRKCE) and SGK1 (By similarity). mTORC2 functions upstream of Rho GTPases to regulate the actin cytoskeleton, probably by activating one or more Rho-type guanine nucleotide exchange factors (By similarity). mTORC2 promotes the serum-induced formation of stress-fibers or F-actin (By similarity). mTORC2 plays a critical role in AKT1 activation by mediating phosphorylation of different sites depending on the context, such as 'Thr-450', 'Ser-473', 'Ser-477' or 'Thr-479', facilitating the phosphorylation of the activation loop of AKT1 on 'Thr-308' by PDPK1/PDK1 which is a prerequisite for full activation (By similarity). mTORC2 regulates the phosphorylation of SGK1 at 'Ser-422' (By similarity). mTORC2 also modulates the phosphorylation of PRKCA on 'Ser-657' (By similarity). Within mTORC2, MLST8 acts as a bridge between MAPKAP1/SIN1 and MTOR (By similarity).</text>
</comment>
<comment type="subunit">
    <text evidence="1">Part of the mechanistic target of rapamycin complex 1 (mTORC1) which contains MTOR, MLST8 and RPTOR. mTORC1 associates with AKT1S1/PRAS40, which inhibits its activity. mTORC1 binds to and is inhibited by FKBP12-rapamycin. Within mTORC1, interacts directly with MTOR and RPTOR. Component of the mechanistic target of rapamycin complex 2 (mTORC2), consisting in two heterotretramers composed of MTOR, MLST8, RICTOR and MAPKAP1/SIN1. Contrary to mTORC1, mTORC2 does not bind to and is not sensitive to FKBP12-rapamycin. mTORC1 and mTORC2 associate with DEPTOR, which regulates their activity. Interacts with RHEB. Interacts with MEAK7. Interacts with SIK3. Interacts with SLC38A7; this interaction promotes the recruitment of mTORC1 to the lysosome and its subsequent activation.</text>
</comment>
<comment type="subcellular location">
    <subcellularLocation>
        <location evidence="1">Lysosome membrane</location>
    </subcellularLocation>
    <subcellularLocation>
        <location evidence="2">Cytoplasm</location>
    </subcellularLocation>
    <text evidence="1">Targeting to lysosomal membrane depends on amino acid availability: mTORC1 is recruited to lysosome membranes via interaction with GTP-bound form of RagA/RRAGA (or RagB/RRAGB) in complex with the GDP-bound form of RagC/RRAGC (or RagD/RRAGD), promoting its mTORC1 recruitment to the lysosomes.</text>
</comment>
<comment type="PTM">
    <text evidence="1">Phosphorylation at Thr-51 by CDK1 promotes ubiquitination by the SCF(FBXW7) complex, followed by degradation.</text>
</comment>
<comment type="PTM">
    <text evidence="1 4">Ubiquitination by the SCF(FBXW7) and SCF(FBXW11) complexes following phosphorylation at Thr-51 by CDK1, leads to its degradation by the proteasome (By similarity). Ubiquitination at Lys-305 and Lys-313 by TRAF2 via 'Lys-63'-linked polyubiquitin chains inhibits formation of the mTORC2 complex, while promoting formation of the mTORC1 complex: ubiquitination disrupts the interaction between MLST8 and MAPKAP1/SIN1 to favor mTORC1 assembly (PubMed:28489822). Deubiquitination at Lys-305 and Lys-313 by OTUD7B promotes MLST8 interaction with MAPKAP1/SIN1, facilitating mTORC2 assembly (PubMed:28489822).</text>
</comment>
<comment type="PTM">
    <text evidence="5">Sumoylation with SUMO1, SUMO2 and SUMO3 promotes assembly of both mTORC1 and mTORC2 complexes.</text>
</comment>
<comment type="disruption phenotype">
    <text evidence="3">Death around 10.5 dpc due to multiple defects in vascular system development. In addition, they exhibit a delayed development of their cephalic region.</text>
</comment>
<comment type="similarity">
    <text evidence="6">Belongs to the WD repeat LST8 family.</text>
</comment>
<protein>
    <recommendedName>
        <fullName evidence="6">Target of rapamycin complex subunit LST8</fullName>
        <shortName>TORC subunit LST8</shortName>
    </recommendedName>
    <alternativeName>
        <fullName>G protein beta subunit-like</fullName>
        <shortName>Protein GbetaL</shortName>
    </alternativeName>
    <alternativeName>
        <fullName>Mammalian lethal with SEC13 protein 8</fullName>
        <shortName>mLST8</shortName>
    </alternativeName>
</protein>
<reference key="1">
    <citation type="journal article" date="2001" name="J. Endocrinol.">
        <title>Insulin regulation of a novel WD-40 repeat protein in adipocytes.</title>
        <authorList>
            <person name="Rodgers B.D."/>
            <person name="Levine M.A."/>
            <person name="Bernier M."/>
            <person name="Montrose-Rafizadeh C."/>
        </authorList>
    </citation>
    <scope>NUCLEOTIDE SEQUENCE [MRNA]</scope>
</reference>
<reference key="2">
    <citation type="journal article" date="2005" name="Science">
        <title>The transcriptional landscape of the mammalian genome.</title>
        <authorList>
            <person name="Carninci P."/>
            <person name="Kasukawa T."/>
            <person name="Katayama S."/>
            <person name="Gough J."/>
            <person name="Frith M.C."/>
            <person name="Maeda N."/>
            <person name="Oyama R."/>
            <person name="Ravasi T."/>
            <person name="Lenhard B."/>
            <person name="Wells C."/>
            <person name="Kodzius R."/>
            <person name="Shimokawa K."/>
            <person name="Bajic V.B."/>
            <person name="Brenner S.E."/>
            <person name="Batalov S."/>
            <person name="Forrest A.R."/>
            <person name="Zavolan M."/>
            <person name="Davis M.J."/>
            <person name="Wilming L.G."/>
            <person name="Aidinis V."/>
            <person name="Allen J.E."/>
            <person name="Ambesi-Impiombato A."/>
            <person name="Apweiler R."/>
            <person name="Aturaliya R.N."/>
            <person name="Bailey T.L."/>
            <person name="Bansal M."/>
            <person name="Baxter L."/>
            <person name="Beisel K.W."/>
            <person name="Bersano T."/>
            <person name="Bono H."/>
            <person name="Chalk A.M."/>
            <person name="Chiu K.P."/>
            <person name="Choudhary V."/>
            <person name="Christoffels A."/>
            <person name="Clutterbuck D.R."/>
            <person name="Crowe M.L."/>
            <person name="Dalla E."/>
            <person name="Dalrymple B.P."/>
            <person name="de Bono B."/>
            <person name="Della Gatta G."/>
            <person name="di Bernardo D."/>
            <person name="Down T."/>
            <person name="Engstrom P."/>
            <person name="Fagiolini M."/>
            <person name="Faulkner G."/>
            <person name="Fletcher C.F."/>
            <person name="Fukushima T."/>
            <person name="Furuno M."/>
            <person name="Futaki S."/>
            <person name="Gariboldi M."/>
            <person name="Georgii-Hemming P."/>
            <person name="Gingeras T.R."/>
            <person name="Gojobori T."/>
            <person name="Green R.E."/>
            <person name="Gustincich S."/>
            <person name="Harbers M."/>
            <person name="Hayashi Y."/>
            <person name="Hensch T.K."/>
            <person name="Hirokawa N."/>
            <person name="Hill D."/>
            <person name="Huminiecki L."/>
            <person name="Iacono M."/>
            <person name="Ikeo K."/>
            <person name="Iwama A."/>
            <person name="Ishikawa T."/>
            <person name="Jakt M."/>
            <person name="Kanapin A."/>
            <person name="Katoh M."/>
            <person name="Kawasawa Y."/>
            <person name="Kelso J."/>
            <person name="Kitamura H."/>
            <person name="Kitano H."/>
            <person name="Kollias G."/>
            <person name="Krishnan S.P."/>
            <person name="Kruger A."/>
            <person name="Kummerfeld S.K."/>
            <person name="Kurochkin I.V."/>
            <person name="Lareau L.F."/>
            <person name="Lazarevic D."/>
            <person name="Lipovich L."/>
            <person name="Liu J."/>
            <person name="Liuni S."/>
            <person name="McWilliam S."/>
            <person name="Madan Babu M."/>
            <person name="Madera M."/>
            <person name="Marchionni L."/>
            <person name="Matsuda H."/>
            <person name="Matsuzawa S."/>
            <person name="Miki H."/>
            <person name="Mignone F."/>
            <person name="Miyake S."/>
            <person name="Morris K."/>
            <person name="Mottagui-Tabar S."/>
            <person name="Mulder N."/>
            <person name="Nakano N."/>
            <person name="Nakauchi H."/>
            <person name="Ng P."/>
            <person name="Nilsson R."/>
            <person name="Nishiguchi S."/>
            <person name="Nishikawa S."/>
            <person name="Nori F."/>
            <person name="Ohara O."/>
            <person name="Okazaki Y."/>
            <person name="Orlando V."/>
            <person name="Pang K.C."/>
            <person name="Pavan W.J."/>
            <person name="Pavesi G."/>
            <person name="Pesole G."/>
            <person name="Petrovsky N."/>
            <person name="Piazza S."/>
            <person name="Reed J."/>
            <person name="Reid J.F."/>
            <person name="Ring B.Z."/>
            <person name="Ringwald M."/>
            <person name="Rost B."/>
            <person name="Ruan Y."/>
            <person name="Salzberg S.L."/>
            <person name="Sandelin A."/>
            <person name="Schneider C."/>
            <person name="Schoenbach C."/>
            <person name="Sekiguchi K."/>
            <person name="Semple C.A."/>
            <person name="Seno S."/>
            <person name="Sessa L."/>
            <person name="Sheng Y."/>
            <person name="Shibata Y."/>
            <person name="Shimada H."/>
            <person name="Shimada K."/>
            <person name="Silva D."/>
            <person name="Sinclair B."/>
            <person name="Sperling S."/>
            <person name="Stupka E."/>
            <person name="Sugiura K."/>
            <person name="Sultana R."/>
            <person name="Takenaka Y."/>
            <person name="Taki K."/>
            <person name="Tammoja K."/>
            <person name="Tan S.L."/>
            <person name="Tang S."/>
            <person name="Taylor M.S."/>
            <person name="Tegner J."/>
            <person name="Teichmann S.A."/>
            <person name="Ueda H.R."/>
            <person name="van Nimwegen E."/>
            <person name="Verardo R."/>
            <person name="Wei C.L."/>
            <person name="Yagi K."/>
            <person name="Yamanishi H."/>
            <person name="Zabarovsky E."/>
            <person name="Zhu S."/>
            <person name="Zimmer A."/>
            <person name="Hide W."/>
            <person name="Bult C."/>
            <person name="Grimmond S.M."/>
            <person name="Teasdale R.D."/>
            <person name="Liu E.T."/>
            <person name="Brusic V."/>
            <person name="Quackenbush J."/>
            <person name="Wahlestedt C."/>
            <person name="Mattick J.S."/>
            <person name="Hume D.A."/>
            <person name="Kai C."/>
            <person name="Sasaki D."/>
            <person name="Tomaru Y."/>
            <person name="Fukuda S."/>
            <person name="Kanamori-Katayama M."/>
            <person name="Suzuki M."/>
            <person name="Aoki J."/>
            <person name="Arakawa T."/>
            <person name="Iida J."/>
            <person name="Imamura K."/>
            <person name="Itoh M."/>
            <person name="Kato T."/>
            <person name="Kawaji H."/>
            <person name="Kawagashira N."/>
            <person name="Kawashima T."/>
            <person name="Kojima M."/>
            <person name="Kondo S."/>
            <person name="Konno H."/>
            <person name="Nakano K."/>
            <person name="Ninomiya N."/>
            <person name="Nishio T."/>
            <person name="Okada M."/>
            <person name="Plessy C."/>
            <person name="Shibata K."/>
            <person name="Shiraki T."/>
            <person name="Suzuki S."/>
            <person name="Tagami M."/>
            <person name="Waki K."/>
            <person name="Watahiki A."/>
            <person name="Okamura-Oho Y."/>
            <person name="Suzuki H."/>
            <person name="Kawai J."/>
            <person name="Hayashizaki Y."/>
        </authorList>
    </citation>
    <scope>NUCLEOTIDE SEQUENCE [LARGE SCALE MRNA]</scope>
    <source>
        <strain>C57BL/6J</strain>
        <tissue>Head</tissue>
        <tissue>Hypothalamus</tissue>
        <tissue>Kidney</tissue>
        <tissue>Thymus</tissue>
    </source>
</reference>
<reference key="3">
    <citation type="journal article" date="2004" name="Genome Res.">
        <title>The status, quality, and expansion of the NIH full-length cDNA project: the Mammalian Gene Collection (MGC).</title>
        <authorList>
            <consortium name="The MGC Project Team"/>
        </authorList>
    </citation>
    <scope>NUCLEOTIDE SEQUENCE [LARGE SCALE MRNA]</scope>
    <source>
        <strain>FVB/N</strain>
        <tissue>Kidney</tissue>
    </source>
</reference>
<reference key="4">
    <citation type="journal article" date="2003" name="Mol. Cell">
        <title>GbetaL, a positive regulator of the rapamycin-sensitive pathway required for the nutrient-sensitive interaction between raptor and mTOR.</title>
        <authorList>
            <person name="Kim D.-H."/>
            <person name="Sarbassov D.D."/>
            <person name="Ali S.M."/>
            <person name="Latek R.R."/>
            <person name="Guntur K.V.P."/>
            <person name="Erdjument-Bromage H."/>
            <person name="Tempst P."/>
            <person name="Sabatini D.M."/>
        </authorList>
    </citation>
    <scope>INTERACTION WITH MTOR</scope>
</reference>
<reference key="5">
    <citation type="journal article" date="2006" name="Dev. Cell">
        <title>Ablation in mice of the mTORC components raptor, rictor, or mLST8 reveals that mTORC2 is required for signaling to Akt-FOXO and PKCalpha, but not S6K1.</title>
        <authorList>
            <person name="Guertin D.A."/>
            <person name="Stevens D.M."/>
            <person name="Thoreen C.C."/>
            <person name="Burds A.A."/>
            <person name="Kalaany N.Y."/>
            <person name="Moffat J."/>
            <person name="Brown M."/>
            <person name="Fitzgerald K.J."/>
            <person name="Sabatini D.M."/>
        </authorList>
    </citation>
    <scope>FUNCTION</scope>
    <scope>DISRUPTION PHENOTYPE</scope>
</reference>
<reference key="6">
    <citation type="journal article" date="2010" name="Cell">
        <title>A tissue-specific atlas of mouse protein phosphorylation and expression.</title>
        <authorList>
            <person name="Huttlin E.L."/>
            <person name="Jedrychowski M.P."/>
            <person name="Elias J.E."/>
            <person name="Goswami T."/>
            <person name="Rad R."/>
            <person name="Beausoleil S.A."/>
            <person name="Villen J."/>
            <person name="Haas W."/>
            <person name="Sowa M.E."/>
            <person name="Gygi S.P."/>
        </authorList>
    </citation>
    <scope>IDENTIFICATION BY MASS SPECTROMETRY [LARGE SCALE ANALYSIS]</scope>
    <source>
        <tissue>Brain</tissue>
        <tissue>Heart</tissue>
        <tissue>Kidney</tissue>
        <tissue>Lung</tissue>
        <tissue>Pancreas</tissue>
        <tissue>Spleen</tissue>
        <tissue>Testis</tissue>
    </source>
</reference>
<reference key="7">
    <citation type="journal article" date="2010" name="Genes Dev.">
        <title>Tel2 structure and function in the Hsp90-dependent maturation of mTOR and ATR complexes.</title>
        <authorList>
            <person name="Takai H."/>
            <person name="Xie Y."/>
            <person name="de Lange T."/>
            <person name="Pavletich N.P."/>
        </authorList>
    </citation>
    <scope>INTERACTION WITH MTOR</scope>
</reference>
<reference key="8">
    <citation type="journal article" date="2017" name="Nature">
        <title>TRAF2 and OTUD7B govern a ubiquitin-dependent switch that regulates mTORC2 signalling.</title>
        <authorList>
            <person name="Wang B."/>
            <person name="Jie Z."/>
            <person name="Joo D."/>
            <person name="Ordureau A."/>
            <person name="Liu P."/>
            <person name="Gan W."/>
            <person name="Guo J."/>
            <person name="Zhang J."/>
            <person name="North B.J."/>
            <person name="Dai X."/>
            <person name="Cheng X."/>
            <person name="Bian X."/>
            <person name="Zhang L."/>
            <person name="Harper J.W."/>
            <person name="Sun S.C."/>
            <person name="Wei W."/>
        </authorList>
    </citation>
    <scope>UBIQUITINATION AT LYS-305 AND LYS-313</scope>
    <scope>IDENTIFICATION IN THE MTORC2 COMPLEX</scope>
    <scope>IDENTIFICATION IN THE MTORC1 COMPLEX</scope>
</reference>
<reference key="9">
    <citation type="journal article" date="2024" name="J. Biol. Chem.">
        <title>SUMO modifies GbetaL and mediates mTOR signaling.</title>
        <authorList>
            <person name="Park S.L.L."/>
            <person name="Ramirez-Jarquin U.N."/>
            <person name="Shahani N."/>
            <person name="Rivera O."/>
            <person name="Sharma M."/>
            <person name="Joshi P.S."/>
            <person name="Hansalia A."/>
            <person name="Dagar S."/>
            <person name="McManus F.P."/>
            <person name="Thibault P."/>
            <person name="Subramaniam S."/>
        </authorList>
    </citation>
    <scope>SUMOYLATION</scope>
</reference>
<feature type="chain" id="PRO_0000326500" description="Target of rapamycin complex subunit LST8">
    <location>
        <begin position="1"/>
        <end position="326"/>
    </location>
</feature>
<feature type="repeat" description="WD 1">
    <location>
        <begin position="1"/>
        <end position="37"/>
    </location>
</feature>
<feature type="repeat" description="WD 2">
    <location>
        <begin position="40"/>
        <end position="80"/>
    </location>
</feature>
<feature type="repeat" description="WD 3">
    <location>
        <begin position="83"/>
        <end position="122"/>
    </location>
</feature>
<feature type="repeat" description="WD 4">
    <location>
        <begin position="126"/>
        <end position="165"/>
    </location>
</feature>
<feature type="repeat" description="WD 5">
    <location>
        <begin position="168"/>
        <end position="207"/>
    </location>
</feature>
<feature type="repeat" description="WD 6">
    <location>
        <begin position="218"/>
        <end position="257"/>
    </location>
</feature>
<feature type="repeat" description="WD 7">
    <location>
        <begin position="268"/>
        <end position="309"/>
    </location>
</feature>
<feature type="modified residue" description="N-acetylmethionine" evidence="1">
    <location>
        <position position="1"/>
    </location>
</feature>
<feature type="modified residue" description="Phosphothreonine" evidence="1">
    <location>
        <position position="51"/>
    </location>
</feature>
<feature type="cross-link" description="Glycyl lysine isopeptide (Lys-Gly) (interchain with G-Cter in SUMO3)" evidence="1">
    <location>
        <position position="86"/>
    </location>
</feature>
<feature type="cross-link" description="Glycyl lysine isopeptide (Lys-Gly) (interchain with G-Cter in SUMO3)" evidence="1">
    <location>
        <position position="215"/>
    </location>
</feature>
<feature type="cross-link" description="Glycyl lysine isopeptide (Lys-Gly) (interchain with G-Cter in SUMO3)" evidence="1">
    <location>
        <position position="245"/>
    </location>
</feature>
<feature type="cross-link" description="Glycyl lysine isopeptide (Lys-Gly) (interchain with G-Cter in SUMO3)" evidence="1">
    <location>
        <position position="261"/>
    </location>
</feature>
<feature type="cross-link" description="Glycyl lysine isopeptide (Lys-Gly) (interchain with G-Cter in SUMO3); alternate" evidence="1">
    <location>
        <position position="305"/>
    </location>
</feature>
<feature type="cross-link" description="Glycyl lysine isopeptide (Lys-Gly) (interchain with G-Cter in ubiquitin); alternate" evidence="1">
    <location>
        <position position="305"/>
    </location>
</feature>
<feature type="cross-link" description="Glycyl lysine isopeptide (Lys-Gly) (interchain with G-Cter in SUMO1); alternate" evidence="1">
    <location>
        <position position="313"/>
    </location>
</feature>
<feature type="cross-link" description="Glycyl lysine isopeptide (Lys-Gly) (interchain with G-Cter in ubiquitin); alternate" evidence="4">
    <location>
        <position position="313"/>
    </location>
</feature>
<feature type="sequence conflict" description="In Ref. 2; BAC39006." evidence="6" ref="2">
    <original>V</original>
    <variation>G</variation>
    <location>
        <position position="24"/>
    </location>
</feature>
<feature type="sequence conflict" description="In Ref. 2; BAC39006." evidence="6" ref="2">
    <original>V</original>
    <variation>G</variation>
    <location>
        <position position="127"/>
    </location>
</feature>
<feature type="sequence conflict" description="In Ref. 1; AAF37719." evidence="6" ref="1">
    <original>S</original>
    <variation>F</variation>
    <location>
        <position position="171"/>
    </location>
</feature>
<feature type="sequence conflict" description="In Ref. 1; AAF37719." evidence="6" ref="1">
    <original>Y</original>
    <variation>F</variation>
    <location>
        <position position="195"/>
    </location>
</feature>
<feature type="sequence conflict" description="In Ref. 1; AAF37719." evidence="6" ref="1">
    <original>D</original>
    <variation>E</variation>
    <location>
        <position position="206"/>
    </location>
</feature>
<feature type="sequence conflict" description="In Ref. 2; BAC33243." evidence="6" ref="2">
    <original>S</original>
    <variation>G</variation>
    <location>
        <position position="229"/>
    </location>
</feature>
<evidence type="ECO:0000250" key="1">
    <source>
        <dbReference type="UniProtKB" id="Q9BVC4"/>
    </source>
</evidence>
<evidence type="ECO:0000250" key="2">
    <source>
        <dbReference type="UniProtKB" id="Q9Z2K5"/>
    </source>
</evidence>
<evidence type="ECO:0000269" key="3">
    <source>
    </source>
</evidence>
<evidence type="ECO:0000269" key="4">
    <source>
    </source>
</evidence>
<evidence type="ECO:0000269" key="5">
    <source>
    </source>
</evidence>
<evidence type="ECO:0000305" key="6"/>
<evidence type="ECO:0000312" key="7">
    <source>
        <dbReference type="MGI" id="MGI:1929514"/>
    </source>
</evidence>
<keyword id="KW-0007">Acetylation</keyword>
<keyword id="KW-0963">Cytoplasm</keyword>
<keyword id="KW-1017">Isopeptide bond</keyword>
<keyword id="KW-0458">Lysosome</keyword>
<keyword id="KW-0472">Membrane</keyword>
<keyword id="KW-0597">Phosphoprotein</keyword>
<keyword id="KW-1185">Reference proteome</keyword>
<keyword id="KW-0677">Repeat</keyword>
<keyword id="KW-0832">Ubl conjugation</keyword>
<keyword id="KW-0853">WD repeat</keyword>
<proteinExistence type="evidence at protein level"/>
<name>LST8_MOUSE</name>
<sequence length="326" mass="35851">MNTTPGTVGSDPVILATAGYDHTVRFWQAHSGICTRTVQHQDSQVNALEITPDRSMIAAAGYQHIRMYDLNSNNPNPIISYDGVSKNIASVGFHEDGRWMYTGGEDCTARIWDLRSRNLQCQRIFQVNAPINCVCLHPNQAELIVGDQSGAIHIWDLKTDHNEQLIPEPESSITSAHIDPDASYMAAVNSAGNCYVWNLTGGIGDDVTQLIPKTKIPAHTRYALQCRFSPDSTLLATCSADQTCKIWRTSNFSLMTELSIKSSNPGESSRGWMWGCAFSGDSQYIVTASSDNLARLWCVETGEIKREYGGHQKAVVCLAFNDSVLG</sequence>
<dbReference type="EMBL" id="AF237676">
    <property type="protein sequence ID" value="AAF37719.1"/>
    <property type="molecule type" value="mRNA"/>
</dbReference>
<dbReference type="EMBL" id="AK002751">
    <property type="protein sequence ID" value="BAB22328.1"/>
    <property type="molecule type" value="mRNA"/>
</dbReference>
<dbReference type="EMBL" id="AK038515">
    <property type="protein sequence ID" value="BAC30024.1"/>
    <property type="molecule type" value="mRNA"/>
</dbReference>
<dbReference type="EMBL" id="AK040100">
    <property type="protein sequence ID" value="BAC30510.1"/>
    <property type="molecule type" value="mRNA"/>
</dbReference>
<dbReference type="EMBL" id="AK048102">
    <property type="protein sequence ID" value="BAC33243.1"/>
    <property type="molecule type" value="mRNA"/>
</dbReference>
<dbReference type="EMBL" id="AK077680">
    <property type="protein sequence ID" value="BAC36952.1"/>
    <property type="molecule type" value="mRNA"/>
</dbReference>
<dbReference type="EMBL" id="AK083731">
    <property type="protein sequence ID" value="BAC39006.1"/>
    <property type="molecule type" value="mRNA"/>
</dbReference>
<dbReference type="EMBL" id="BC015279">
    <property type="protein sequence ID" value="AAH15279.1"/>
    <property type="molecule type" value="mRNA"/>
</dbReference>
<dbReference type="CCDS" id="CCDS28484.1"/>
<dbReference type="RefSeq" id="NP_001239392.1">
    <property type="nucleotide sequence ID" value="NM_001252463.1"/>
</dbReference>
<dbReference type="RefSeq" id="NP_001239393.1">
    <property type="nucleotide sequence ID" value="NM_001252464.1"/>
</dbReference>
<dbReference type="RefSeq" id="NP_001239394.1">
    <property type="nucleotide sequence ID" value="NM_001252465.1"/>
</dbReference>
<dbReference type="RefSeq" id="NP_064372.2">
    <property type="nucleotide sequence ID" value="NM_019988.5"/>
</dbReference>
<dbReference type="SMR" id="Q9DCJ1"/>
<dbReference type="BioGRID" id="208141">
    <property type="interactions" value="8"/>
</dbReference>
<dbReference type="ComplexPortal" id="CPX-4472">
    <property type="entry name" value="mTORC2 complex"/>
</dbReference>
<dbReference type="ComplexPortal" id="CPX-4473">
    <property type="entry name" value="mTORC1 complex"/>
</dbReference>
<dbReference type="DIP" id="DIP-46976N"/>
<dbReference type="FunCoup" id="Q9DCJ1">
    <property type="interactions" value="1488"/>
</dbReference>
<dbReference type="IntAct" id="Q9DCJ1">
    <property type="interactions" value="4"/>
</dbReference>
<dbReference type="STRING" id="10090.ENSMUSP00000157137"/>
<dbReference type="iPTMnet" id="Q9DCJ1"/>
<dbReference type="PhosphoSitePlus" id="Q9DCJ1"/>
<dbReference type="SwissPalm" id="Q9DCJ1"/>
<dbReference type="PaxDb" id="10090-ENSMUSP00000136287"/>
<dbReference type="PeptideAtlas" id="Q9DCJ1"/>
<dbReference type="ProteomicsDB" id="293409"/>
<dbReference type="Pumba" id="Q9DCJ1"/>
<dbReference type="Antibodypedia" id="23622">
    <property type="antibodies" value="481 antibodies from 39 providers"/>
</dbReference>
<dbReference type="DNASU" id="56716"/>
<dbReference type="Ensembl" id="ENSMUST00000070888.14">
    <property type="protein sequence ID" value="ENSMUSP00000065004.7"/>
    <property type="gene ID" value="ENSMUSG00000024142.16"/>
</dbReference>
<dbReference type="Ensembl" id="ENSMUST00000179163.3">
    <property type="protein sequence ID" value="ENSMUSP00000136287.2"/>
    <property type="gene ID" value="ENSMUSG00000024142.16"/>
</dbReference>
<dbReference type="Ensembl" id="ENSMUST00000234335.2">
    <property type="protein sequence ID" value="ENSMUSP00000157301.2"/>
    <property type="gene ID" value="ENSMUSG00000024142.16"/>
</dbReference>
<dbReference type="Ensembl" id="ENSMUST00000234686.2">
    <property type="protein sequence ID" value="ENSMUSP00000157137.2"/>
    <property type="gene ID" value="ENSMUSG00000024142.16"/>
</dbReference>
<dbReference type="GeneID" id="56716"/>
<dbReference type="KEGG" id="mmu:56716"/>
<dbReference type="UCSC" id="uc008awg.3">
    <property type="organism name" value="mouse"/>
</dbReference>
<dbReference type="AGR" id="MGI:1929514"/>
<dbReference type="CTD" id="64223"/>
<dbReference type="MGI" id="MGI:1929514">
    <property type="gene designation" value="Mlst8"/>
</dbReference>
<dbReference type="VEuPathDB" id="HostDB:ENSMUSG00000024142"/>
<dbReference type="eggNOG" id="KOG0315">
    <property type="taxonomic scope" value="Eukaryota"/>
</dbReference>
<dbReference type="GeneTree" id="ENSGT00390000014795"/>
<dbReference type="HOGENOM" id="CLU_000288_57_5_1"/>
<dbReference type="InParanoid" id="Q9DCJ1"/>
<dbReference type="OMA" id="VQRNYKH"/>
<dbReference type="OrthoDB" id="400at2759"/>
<dbReference type="PhylomeDB" id="Q9DCJ1"/>
<dbReference type="TreeFam" id="TF318577"/>
<dbReference type="Reactome" id="R-MMU-1257604">
    <property type="pathway name" value="PIP3 activates AKT signaling"/>
</dbReference>
<dbReference type="Reactome" id="R-MMU-1632852">
    <property type="pathway name" value="Macroautophagy"/>
</dbReference>
<dbReference type="Reactome" id="R-MMU-165159">
    <property type="pathway name" value="MTOR signalling"/>
</dbReference>
<dbReference type="Reactome" id="R-MMU-166208">
    <property type="pathway name" value="mTORC1-mediated signalling"/>
</dbReference>
<dbReference type="Reactome" id="R-MMU-3371571">
    <property type="pathway name" value="HSF1-dependent transactivation"/>
</dbReference>
<dbReference type="Reactome" id="R-MMU-380972">
    <property type="pathway name" value="Energy dependent regulation of mTOR by LKB1-AMPK"/>
</dbReference>
<dbReference type="Reactome" id="R-MMU-389357">
    <property type="pathway name" value="CD28 dependent PI3K/Akt signaling"/>
</dbReference>
<dbReference type="Reactome" id="R-MMU-5218920">
    <property type="pathway name" value="VEGFR2 mediated vascular permeability"/>
</dbReference>
<dbReference type="Reactome" id="R-MMU-5628897">
    <property type="pathway name" value="TP53 Regulates Metabolic Genes"/>
</dbReference>
<dbReference type="Reactome" id="R-MMU-6804757">
    <property type="pathway name" value="Regulation of TP53 Degradation"/>
</dbReference>
<dbReference type="Reactome" id="R-MMU-8943724">
    <property type="pathway name" value="Regulation of PTEN gene transcription"/>
</dbReference>
<dbReference type="Reactome" id="R-MMU-9639288">
    <property type="pathway name" value="Amino acids regulate mTORC1"/>
</dbReference>
<dbReference type="Reactome" id="R-MMU-9856530">
    <property type="pathway name" value="High laminar flow shear stress activates signaling by PIEZO1 and PECAM1:CDH5:KDR in endothelial cells"/>
</dbReference>
<dbReference type="BioGRID-ORCS" id="56716">
    <property type="hits" value="17 hits in 78 CRISPR screens"/>
</dbReference>
<dbReference type="PRO" id="PR:Q9DCJ1"/>
<dbReference type="Proteomes" id="UP000000589">
    <property type="component" value="Chromosome 17"/>
</dbReference>
<dbReference type="RNAct" id="Q9DCJ1">
    <property type="molecule type" value="protein"/>
</dbReference>
<dbReference type="Bgee" id="ENSMUSG00000024142">
    <property type="expression patterns" value="Expressed in granulocyte and 246 other cell types or tissues"/>
</dbReference>
<dbReference type="ExpressionAtlas" id="Q9DCJ1">
    <property type="expression patterns" value="baseline and differential"/>
</dbReference>
<dbReference type="GO" id="GO:0005737">
    <property type="term" value="C:cytoplasm"/>
    <property type="evidence" value="ECO:0000250"/>
    <property type="project" value="UniProtKB"/>
</dbReference>
<dbReference type="GO" id="GO:0005765">
    <property type="term" value="C:lysosomal membrane"/>
    <property type="evidence" value="ECO:0007669"/>
    <property type="project" value="UniProtKB-SubCell"/>
</dbReference>
<dbReference type="GO" id="GO:1902554">
    <property type="term" value="C:serine/threonine protein kinase complex"/>
    <property type="evidence" value="ECO:0007669"/>
    <property type="project" value="Ensembl"/>
</dbReference>
<dbReference type="GO" id="GO:0031931">
    <property type="term" value="C:TORC1 complex"/>
    <property type="evidence" value="ECO:0000314"/>
    <property type="project" value="WormBase"/>
</dbReference>
<dbReference type="GO" id="GO:0031932">
    <property type="term" value="C:TORC2 complex"/>
    <property type="evidence" value="ECO:0000250"/>
    <property type="project" value="UniProtKB"/>
</dbReference>
<dbReference type="GO" id="GO:0043539">
    <property type="term" value="F:protein serine/threonine kinase activator activity"/>
    <property type="evidence" value="ECO:0007669"/>
    <property type="project" value="Ensembl"/>
</dbReference>
<dbReference type="GO" id="GO:0030674">
    <property type="term" value="F:protein-macromolecule adaptor activity"/>
    <property type="evidence" value="ECO:0007669"/>
    <property type="project" value="Ensembl"/>
</dbReference>
<dbReference type="GO" id="GO:0071456">
    <property type="term" value="P:cellular response to hypoxia"/>
    <property type="evidence" value="ECO:0000303"/>
    <property type="project" value="ComplexPortal"/>
</dbReference>
<dbReference type="GO" id="GO:0031669">
    <property type="term" value="P:cellular response to nutrient levels"/>
    <property type="evidence" value="ECO:0000303"/>
    <property type="project" value="ComplexPortal"/>
</dbReference>
<dbReference type="GO" id="GO:0071470">
    <property type="term" value="P:cellular response to osmotic stress"/>
    <property type="evidence" value="ECO:0000303"/>
    <property type="project" value="ComplexPortal"/>
</dbReference>
<dbReference type="GO" id="GO:0007010">
    <property type="term" value="P:cytoskeleton organization"/>
    <property type="evidence" value="ECO:0000303"/>
    <property type="project" value="ComplexPortal"/>
</dbReference>
<dbReference type="GO" id="GO:0006974">
    <property type="term" value="P:DNA damage response"/>
    <property type="evidence" value="ECO:0000303"/>
    <property type="project" value="ComplexPortal"/>
</dbReference>
<dbReference type="GO" id="GO:0043066">
    <property type="term" value="P:negative regulation of apoptotic process"/>
    <property type="evidence" value="ECO:0000303"/>
    <property type="project" value="ComplexPortal"/>
</dbReference>
<dbReference type="GO" id="GO:0010507">
    <property type="term" value="P:negative regulation of autophagy"/>
    <property type="evidence" value="ECO:0000303"/>
    <property type="project" value="ComplexPortal"/>
</dbReference>
<dbReference type="GO" id="GO:0030838">
    <property type="term" value="P:positive regulation of actin filament polymerization"/>
    <property type="evidence" value="ECO:0000315"/>
    <property type="project" value="MGI"/>
</dbReference>
<dbReference type="GO" id="GO:0030307">
    <property type="term" value="P:positive regulation of cell growth"/>
    <property type="evidence" value="ECO:0000303"/>
    <property type="project" value="ComplexPortal"/>
</dbReference>
<dbReference type="GO" id="GO:0045821">
    <property type="term" value="P:positive regulation of glycolytic process"/>
    <property type="evidence" value="ECO:0000303"/>
    <property type="project" value="ComplexPortal"/>
</dbReference>
<dbReference type="GO" id="GO:0046889">
    <property type="term" value="P:positive regulation of lipid biosynthetic process"/>
    <property type="evidence" value="ECO:0000303"/>
    <property type="project" value="ComplexPortal"/>
</dbReference>
<dbReference type="GO" id="GO:1905857">
    <property type="term" value="P:positive regulation of pentose-phosphate shunt"/>
    <property type="evidence" value="ECO:0000303"/>
    <property type="project" value="ComplexPortal"/>
</dbReference>
<dbReference type="GO" id="GO:0032008">
    <property type="term" value="P:positive regulation of TOR signaling"/>
    <property type="evidence" value="ECO:0007669"/>
    <property type="project" value="Ensembl"/>
</dbReference>
<dbReference type="GO" id="GO:0038202">
    <property type="term" value="P:TORC1 signaling"/>
    <property type="evidence" value="ECO:0007669"/>
    <property type="project" value="Ensembl"/>
</dbReference>
<dbReference type="GO" id="GO:0038203">
    <property type="term" value="P:TORC2 signaling"/>
    <property type="evidence" value="ECO:0000250"/>
    <property type="project" value="UniProtKB"/>
</dbReference>
<dbReference type="CDD" id="cd00200">
    <property type="entry name" value="WD40"/>
    <property type="match status" value="1"/>
</dbReference>
<dbReference type="FunFam" id="2.130.10.10:FF:000086">
    <property type="entry name" value="target of rapamycin complex subunit LST8"/>
    <property type="match status" value="1"/>
</dbReference>
<dbReference type="Gene3D" id="2.130.10.10">
    <property type="entry name" value="YVTN repeat-like/Quinoprotein amine dehydrogenase"/>
    <property type="match status" value="1"/>
</dbReference>
<dbReference type="InterPro" id="IPR020472">
    <property type="entry name" value="G-protein_beta_WD-40_rep"/>
</dbReference>
<dbReference type="InterPro" id="IPR037588">
    <property type="entry name" value="MLST8"/>
</dbReference>
<dbReference type="InterPro" id="IPR011047">
    <property type="entry name" value="Quinoprotein_ADH-like_sf"/>
</dbReference>
<dbReference type="InterPro" id="IPR015943">
    <property type="entry name" value="WD40/YVTN_repeat-like_dom_sf"/>
</dbReference>
<dbReference type="InterPro" id="IPR019775">
    <property type="entry name" value="WD40_repeat_CS"/>
</dbReference>
<dbReference type="InterPro" id="IPR001680">
    <property type="entry name" value="WD40_rpt"/>
</dbReference>
<dbReference type="PANTHER" id="PTHR19842">
    <property type="entry name" value="G BETA-LIKE PROTEIN GBL"/>
    <property type="match status" value="1"/>
</dbReference>
<dbReference type="PANTHER" id="PTHR19842:SF0">
    <property type="entry name" value="TARGET OF RAPAMYCIN COMPLEX SUBUNIT LST8"/>
    <property type="match status" value="1"/>
</dbReference>
<dbReference type="Pfam" id="PF00400">
    <property type="entry name" value="WD40"/>
    <property type="match status" value="5"/>
</dbReference>
<dbReference type="PRINTS" id="PR00320">
    <property type="entry name" value="GPROTEINBRPT"/>
</dbReference>
<dbReference type="SMART" id="SM00320">
    <property type="entry name" value="WD40"/>
    <property type="match status" value="6"/>
</dbReference>
<dbReference type="SUPFAM" id="SSF50998">
    <property type="entry name" value="Quinoprotein alcohol dehydrogenase-like"/>
    <property type="match status" value="1"/>
</dbReference>
<dbReference type="PROSITE" id="PS00678">
    <property type="entry name" value="WD_REPEATS_1"/>
    <property type="match status" value="1"/>
</dbReference>
<dbReference type="PROSITE" id="PS50082">
    <property type="entry name" value="WD_REPEATS_2"/>
    <property type="match status" value="3"/>
</dbReference>
<dbReference type="PROSITE" id="PS50294">
    <property type="entry name" value="WD_REPEATS_REGION"/>
    <property type="match status" value="1"/>
</dbReference>
<gene>
    <name evidence="7" type="primary">Mlst8</name>
    <name type="synonym">Gbl</name>
    <name type="synonym">Lst8</name>
</gene>
<accession>Q9DCJ1</accession>
<accession>Q8BNG8</accession>
<accession>Q8C882</accession>
<accession>Q9JKK6</accession>
<organism>
    <name type="scientific">Mus musculus</name>
    <name type="common">Mouse</name>
    <dbReference type="NCBI Taxonomy" id="10090"/>
    <lineage>
        <taxon>Eukaryota</taxon>
        <taxon>Metazoa</taxon>
        <taxon>Chordata</taxon>
        <taxon>Craniata</taxon>
        <taxon>Vertebrata</taxon>
        <taxon>Euteleostomi</taxon>
        <taxon>Mammalia</taxon>
        <taxon>Eutheria</taxon>
        <taxon>Euarchontoglires</taxon>
        <taxon>Glires</taxon>
        <taxon>Rodentia</taxon>
        <taxon>Myomorpha</taxon>
        <taxon>Muroidea</taxon>
        <taxon>Muridae</taxon>
        <taxon>Murinae</taxon>
        <taxon>Mus</taxon>
        <taxon>Mus</taxon>
    </lineage>
</organism>